<organism evidence="3">
    <name type="scientific">Petroselinum crispum</name>
    <name type="common">Parsley</name>
    <name type="synonym">Petroselinum hortense</name>
    <dbReference type="NCBI Taxonomy" id="4043"/>
    <lineage>
        <taxon>Eukaryota</taxon>
        <taxon>Viridiplantae</taxon>
        <taxon>Streptophyta</taxon>
        <taxon>Embryophyta</taxon>
        <taxon>Tracheophyta</taxon>
        <taxon>Spermatophyta</taxon>
        <taxon>Magnoliopsida</taxon>
        <taxon>eudicotyledons</taxon>
        <taxon>Gunneridae</taxon>
        <taxon>Pentapetalae</taxon>
        <taxon>asterids</taxon>
        <taxon>campanulids</taxon>
        <taxon>Apiales</taxon>
        <taxon>Apiaceae</taxon>
        <taxon>Apioideae</taxon>
        <taxon>apioid superclade</taxon>
        <taxon>Apieae</taxon>
        <taxon>Petroselinum</taxon>
    </lineage>
</organism>
<keyword id="KW-0020">Allergen</keyword>
<keyword id="KW-0903">Direct protein sequencing</keyword>
<proteinExistence type="evidence at protein level"/>
<dbReference type="SMR" id="C0HKF5"/>
<dbReference type="GO" id="GO:0005737">
    <property type="term" value="C:cytoplasm"/>
    <property type="evidence" value="ECO:0007669"/>
    <property type="project" value="TreeGrafter"/>
</dbReference>
<dbReference type="GO" id="GO:0005634">
    <property type="term" value="C:nucleus"/>
    <property type="evidence" value="ECO:0007669"/>
    <property type="project" value="TreeGrafter"/>
</dbReference>
<dbReference type="GO" id="GO:0010427">
    <property type="term" value="F:abscisic acid binding"/>
    <property type="evidence" value="ECO:0007669"/>
    <property type="project" value="InterPro"/>
</dbReference>
<dbReference type="GO" id="GO:0042802">
    <property type="term" value="F:identical protein binding"/>
    <property type="evidence" value="ECO:0000353"/>
    <property type="project" value="UniProtKB"/>
</dbReference>
<dbReference type="GO" id="GO:0004864">
    <property type="term" value="F:protein phosphatase inhibitor activity"/>
    <property type="evidence" value="ECO:0007669"/>
    <property type="project" value="InterPro"/>
</dbReference>
<dbReference type="GO" id="GO:0038023">
    <property type="term" value="F:signaling receptor activity"/>
    <property type="evidence" value="ECO:0007669"/>
    <property type="project" value="InterPro"/>
</dbReference>
<dbReference type="GO" id="GO:0009738">
    <property type="term" value="P:abscisic acid-activated signaling pathway"/>
    <property type="evidence" value="ECO:0007669"/>
    <property type="project" value="InterPro"/>
</dbReference>
<dbReference type="GO" id="GO:0006952">
    <property type="term" value="P:defense response"/>
    <property type="evidence" value="ECO:0007669"/>
    <property type="project" value="InterPro"/>
</dbReference>
<dbReference type="CDD" id="cd07816">
    <property type="entry name" value="Bet_v1-like"/>
    <property type="match status" value="1"/>
</dbReference>
<dbReference type="FunFam" id="3.30.530.20:FF:000007">
    <property type="entry name" value="Major pollen allergen Bet v 1-A"/>
    <property type="match status" value="1"/>
</dbReference>
<dbReference type="Gene3D" id="3.30.530.20">
    <property type="match status" value="1"/>
</dbReference>
<dbReference type="InterPro" id="IPR000916">
    <property type="entry name" value="Bet_v_I/MLP"/>
</dbReference>
<dbReference type="InterPro" id="IPR024949">
    <property type="entry name" value="Bet_v_I_allergen"/>
</dbReference>
<dbReference type="InterPro" id="IPR050279">
    <property type="entry name" value="Plant_def-hormone_signal"/>
</dbReference>
<dbReference type="InterPro" id="IPR023393">
    <property type="entry name" value="START-like_dom_sf"/>
</dbReference>
<dbReference type="PANTHER" id="PTHR31213">
    <property type="entry name" value="OS08G0374000 PROTEIN-RELATED"/>
    <property type="match status" value="1"/>
</dbReference>
<dbReference type="PANTHER" id="PTHR31213:SF55">
    <property type="entry name" value="STRESS-INDUCED PROTEIN SAM22"/>
    <property type="match status" value="1"/>
</dbReference>
<dbReference type="Pfam" id="PF00407">
    <property type="entry name" value="Bet_v_1"/>
    <property type="match status" value="1"/>
</dbReference>
<dbReference type="PRINTS" id="PR00634">
    <property type="entry name" value="BETALLERGEN"/>
</dbReference>
<dbReference type="SMART" id="SM01037">
    <property type="entry name" value="Bet_v_1"/>
    <property type="match status" value="1"/>
</dbReference>
<dbReference type="SUPFAM" id="SSF55961">
    <property type="entry name" value="Bet v1-like"/>
    <property type="match status" value="1"/>
</dbReference>
<dbReference type="PROSITE" id="PS00451">
    <property type="entry name" value="PATHOGENESIS_BETVI"/>
    <property type="match status" value="1"/>
</dbReference>
<feature type="chain" id="PRO_0000451728" description="Allergen Pet c 1">
    <location>
        <begin position="1"/>
        <end position="153"/>
    </location>
</feature>
<evidence type="ECO:0000250" key="1">
    <source>
        <dbReference type="UniProtKB" id="P92918"/>
    </source>
</evidence>
<evidence type="ECO:0000269" key="2">
    <source>
    </source>
</evidence>
<evidence type="ECO:0000303" key="3">
    <source>
    </source>
</evidence>
<evidence type="ECO:0000305" key="4"/>
<protein>
    <recommendedName>
        <fullName evidence="3">Allergen Pet c 1</fullName>
    </recommendedName>
    <allergenName evidence="3">Allergen Pet c 1.0201</allergenName>
</protein>
<comment type="subunit">
    <text evidence="2">May form dimers.</text>
</comment>
<comment type="allergen">
    <text evidence="1">Causes an allergic reaction in human.</text>
</comment>
<comment type="similarity">
    <text evidence="4">Belongs to the BetVI family.</text>
</comment>
<reference evidence="4" key="1">
    <citation type="journal article" date="2020" name="Phytochemistry">
        <title>Structural characterization of the Pet c 1.0201 PR-10 protein isolated from roots of Petroselinum crispum (Mill.) Fuss.</title>
        <authorList>
            <person name="Stratilova B."/>
            <person name="Rehulka P."/>
            <person name="Garajova S."/>
            <person name="Rehulkova H."/>
            <person name="Stratilova E."/>
            <person name="Hrmova M."/>
            <person name="Kozmon S."/>
        </authorList>
    </citation>
    <scope>PROTEIN SEQUENCE</scope>
    <scope>IDENTIFICATION BY MASS SPECTROMETRY</scope>
    <scope>SUBUNIT</scope>
</reference>
<name>PET1_PETCR</name>
<sequence length="153" mass="16373">GVQKTVVEAPSTVSAEKMYGFLLDMDTVFPKVLPQLIGKSVEILEGDGSVGTVKLVHLGEATEYTTMKQRVDVIDKAGLAYTYTTIGGDILVEVLESVVNEFVVVPTDGGCIVKNTTIYNTKGDAVLPEDKVKEATEKSALAFKAVEAYLLAN</sequence>
<accession>C0HKF5</accession>